<accession>Q9CPA5</accession>
<gene>
    <name evidence="1" type="primary">lpxC</name>
    <name type="ordered locus">PM0148</name>
</gene>
<comment type="function">
    <text evidence="1">Catalyzes the hydrolysis of UDP-3-O-myristoyl-N-acetylglucosamine to form UDP-3-O-myristoylglucosamine and acetate, the committed step in lipid A biosynthesis.</text>
</comment>
<comment type="catalytic activity">
    <reaction evidence="1">
        <text>a UDP-3-O-[(3R)-3-hydroxyacyl]-N-acetyl-alpha-D-glucosamine + H2O = a UDP-3-O-[(3R)-3-hydroxyacyl]-alpha-D-glucosamine + acetate</text>
        <dbReference type="Rhea" id="RHEA:67816"/>
        <dbReference type="ChEBI" id="CHEBI:15377"/>
        <dbReference type="ChEBI" id="CHEBI:30089"/>
        <dbReference type="ChEBI" id="CHEBI:137740"/>
        <dbReference type="ChEBI" id="CHEBI:173225"/>
        <dbReference type="EC" id="3.5.1.108"/>
    </reaction>
</comment>
<comment type="cofactor">
    <cofactor evidence="1">
        <name>Zn(2+)</name>
        <dbReference type="ChEBI" id="CHEBI:29105"/>
    </cofactor>
</comment>
<comment type="pathway">
    <text evidence="1">Glycolipid biosynthesis; lipid IV(A) biosynthesis; lipid IV(A) from (3R)-3-hydroxytetradecanoyl-[acyl-carrier-protein] and UDP-N-acetyl-alpha-D-glucosamine: step 2/6.</text>
</comment>
<comment type="similarity">
    <text evidence="1">Belongs to the LpxC family.</text>
</comment>
<sequence>MIKQRTLKQSIKVTGVGLHSGNKVTLTLRPAMANTGVIYCRTDLNPPVTFPANANAVRDTMLCTCLVNEEGVRISTVEHLNAALAGLGIDNVIIEVDAPEIPIMDGSASPFIYLLLDAGIEEQNAAKKFIRIKQKVRVEDGDKWAEFTPYNGFRLDFTIDFEHPAIGKDVRNYVMDFSAQAFVQQISRARTFGFMKDIEYLQSQGLALGGSLDNAIVLDDYRILNEDGLRFKDELVRHKMLDAIGDLYMAGYNIIGDFKAYKSGHGLNNKLLRAVLANQEAWEFVTFDDKQAVPHGYEAPTQVLI</sequence>
<keyword id="KW-0378">Hydrolase</keyword>
<keyword id="KW-0441">Lipid A biosynthesis</keyword>
<keyword id="KW-0444">Lipid biosynthesis</keyword>
<keyword id="KW-0443">Lipid metabolism</keyword>
<keyword id="KW-0479">Metal-binding</keyword>
<keyword id="KW-1185">Reference proteome</keyword>
<keyword id="KW-0862">Zinc</keyword>
<feature type="chain" id="PRO_0000191942" description="UDP-3-O-acyl-N-acetylglucosamine deacetylase">
    <location>
        <begin position="1"/>
        <end position="305"/>
    </location>
</feature>
<feature type="active site" description="Proton donor" evidence="1">
    <location>
        <position position="265"/>
    </location>
</feature>
<feature type="binding site" evidence="1">
    <location>
        <position position="79"/>
    </location>
    <ligand>
        <name>Zn(2+)</name>
        <dbReference type="ChEBI" id="CHEBI:29105"/>
    </ligand>
</feature>
<feature type="binding site" evidence="1">
    <location>
        <position position="238"/>
    </location>
    <ligand>
        <name>Zn(2+)</name>
        <dbReference type="ChEBI" id="CHEBI:29105"/>
    </ligand>
</feature>
<feature type="binding site" evidence="1">
    <location>
        <position position="242"/>
    </location>
    <ligand>
        <name>Zn(2+)</name>
        <dbReference type="ChEBI" id="CHEBI:29105"/>
    </ligand>
</feature>
<proteinExistence type="inferred from homology"/>
<protein>
    <recommendedName>
        <fullName evidence="1">UDP-3-O-acyl-N-acetylglucosamine deacetylase</fullName>
        <shortName evidence="1">UDP-3-O-acyl-GlcNAc deacetylase</shortName>
        <ecNumber evidence="1">3.5.1.108</ecNumber>
    </recommendedName>
    <alternativeName>
        <fullName evidence="1">UDP-3-O-[R-3-hydroxymyristoyl]-N-acetylglucosamine deacetylase</fullName>
    </alternativeName>
</protein>
<dbReference type="EC" id="3.5.1.108" evidence="1"/>
<dbReference type="EMBL" id="AE004439">
    <property type="protein sequence ID" value="AAK02232.1"/>
    <property type="molecule type" value="Genomic_DNA"/>
</dbReference>
<dbReference type="RefSeq" id="WP_005723052.1">
    <property type="nucleotide sequence ID" value="NC_002663.1"/>
</dbReference>
<dbReference type="SMR" id="Q9CPA5"/>
<dbReference type="STRING" id="272843.PM0148"/>
<dbReference type="EnsemblBacteria" id="AAK02232">
    <property type="protein sequence ID" value="AAK02232"/>
    <property type="gene ID" value="PM0148"/>
</dbReference>
<dbReference type="KEGG" id="pmu:PM0148"/>
<dbReference type="PATRIC" id="fig|272843.6.peg.153"/>
<dbReference type="HOGENOM" id="CLU_046528_1_0_6"/>
<dbReference type="OrthoDB" id="9802746at2"/>
<dbReference type="UniPathway" id="UPA00359">
    <property type="reaction ID" value="UER00478"/>
</dbReference>
<dbReference type="Proteomes" id="UP000000809">
    <property type="component" value="Chromosome"/>
</dbReference>
<dbReference type="GO" id="GO:0016020">
    <property type="term" value="C:membrane"/>
    <property type="evidence" value="ECO:0007669"/>
    <property type="project" value="GOC"/>
</dbReference>
<dbReference type="GO" id="GO:0046872">
    <property type="term" value="F:metal ion binding"/>
    <property type="evidence" value="ECO:0007669"/>
    <property type="project" value="UniProtKB-KW"/>
</dbReference>
<dbReference type="GO" id="GO:0103117">
    <property type="term" value="F:UDP-3-O-acyl-N-acetylglucosamine deacetylase activity"/>
    <property type="evidence" value="ECO:0007669"/>
    <property type="project" value="UniProtKB-UniRule"/>
</dbReference>
<dbReference type="GO" id="GO:0009245">
    <property type="term" value="P:lipid A biosynthetic process"/>
    <property type="evidence" value="ECO:0007669"/>
    <property type="project" value="UniProtKB-UniRule"/>
</dbReference>
<dbReference type="FunFam" id="3.30.1700.10:FF:000001">
    <property type="entry name" value="UDP-3-O-acyl-N-acetylglucosamine deacetylase"/>
    <property type="match status" value="1"/>
</dbReference>
<dbReference type="FunFam" id="3.30.230.20:FF:000001">
    <property type="entry name" value="UDP-3-O-acyl-N-acetylglucosamine deacetylase"/>
    <property type="match status" value="1"/>
</dbReference>
<dbReference type="Gene3D" id="3.30.230.20">
    <property type="entry name" value="lpxc deacetylase, domain 1"/>
    <property type="match status" value="1"/>
</dbReference>
<dbReference type="Gene3D" id="3.30.1700.10">
    <property type="entry name" value="lpxc deacetylase, domain 2"/>
    <property type="match status" value="1"/>
</dbReference>
<dbReference type="HAMAP" id="MF_00388">
    <property type="entry name" value="LpxC"/>
    <property type="match status" value="1"/>
</dbReference>
<dbReference type="InterPro" id="IPR020568">
    <property type="entry name" value="Ribosomal_Su5_D2-typ_SF"/>
</dbReference>
<dbReference type="InterPro" id="IPR004463">
    <property type="entry name" value="UDP-acyl_GlcNac_deAcase"/>
</dbReference>
<dbReference type="InterPro" id="IPR011334">
    <property type="entry name" value="UDP-acyl_GlcNac_deAcase_C"/>
</dbReference>
<dbReference type="InterPro" id="IPR015870">
    <property type="entry name" value="UDP-acyl_N-AcGlcN_deAcase_N"/>
</dbReference>
<dbReference type="NCBIfam" id="TIGR00325">
    <property type="entry name" value="lpxC"/>
    <property type="match status" value="1"/>
</dbReference>
<dbReference type="PANTHER" id="PTHR33694">
    <property type="entry name" value="UDP-3-O-ACYL-N-ACETYLGLUCOSAMINE DEACETYLASE 1, MITOCHONDRIAL-RELATED"/>
    <property type="match status" value="1"/>
</dbReference>
<dbReference type="PANTHER" id="PTHR33694:SF1">
    <property type="entry name" value="UDP-3-O-ACYL-N-ACETYLGLUCOSAMINE DEACETYLASE 1, MITOCHONDRIAL-RELATED"/>
    <property type="match status" value="1"/>
</dbReference>
<dbReference type="Pfam" id="PF03331">
    <property type="entry name" value="LpxC"/>
    <property type="match status" value="1"/>
</dbReference>
<dbReference type="SUPFAM" id="SSF54211">
    <property type="entry name" value="Ribosomal protein S5 domain 2-like"/>
    <property type="match status" value="2"/>
</dbReference>
<organism>
    <name type="scientific">Pasteurella multocida (strain Pm70)</name>
    <dbReference type="NCBI Taxonomy" id="272843"/>
    <lineage>
        <taxon>Bacteria</taxon>
        <taxon>Pseudomonadati</taxon>
        <taxon>Pseudomonadota</taxon>
        <taxon>Gammaproteobacteria</taxon>
        <taxon>Pasteurellales</taxon>
        <taxon>Pasteurellaceae</taxon>
        <taxon>Pasteurella</taxon>
    </lineage>
</organism>
<reference key="1">
    <citation type="journal article" date="2001" name="Proc. Natl. Acad. Sci. U.S.A.">
        <title>Complete genomic sequence of Pasteurella multocida Pm70.</title>
        <authorList>
            <person name="May B.J."/>
            <person name="Zhang Q."/>
            <person name="Li L.L."/>
            <person name="Paustian M.L."/>
            <person name="Whittam T.S."/>
            <person name="Kapur V."/>
        </authorList>
    </citation>
    <scope>NUCLEOTIDE SEQUENCE [LARGE SCALE GENOMIC DNA]</scope>
    <source>
        <strain>Pm70</strain>
    </source>
</reference>
<name>LPXC_PASMU</name>
<evidence type="ECO:0000255" key="1">
    <source>
        <dbReference type="HAMAP-Rule" id="MF_00388"/>
    </source>
</evidence>